<dbReference type="EC" id="2.8.1.10" evidence="1"/>
<dbReference type="EMBL" id="CP000473">
    <property type="protein sequence ID" value="ABJ88629.1"/>
    <property type="molecule type" value="Genomic_DNA"/>
</dbReference>
<dbReference type="SMR" id="Q01NZ1"/>
<dbReference type="FunCoup" id="Q01NZ1">
    <property type="interactions" value="378"/>
</dbReference>
<dbReference type="STRING" id="234267.Acid_7731"/>
<dbReference type="KEGG" id="sus:Acid_7731"/>
<dbReference type="eggNOG" id="COG2022">
    <property type="taxonomic scope" value="Bacteria"/>
</dbReference>
<dbReference type="HOGENOM" id="CLU_062233_1_0_0"/>
<dbReference type="InParanoid" id="Q01NZ1"/>
<dbReference type="OrthoDB" id="9805935at2"/>
<dbReference type="UniPathway" id="UPA00060"/>
<dbReference type="GO" id="GO:0005737">
    <property type="term" value="C:cytoplasm"/>
    <property type="evidence" value="ECO:0007669"/>
    <property type="project" value="UniProtKB-SubCell"/>
</dbReference>
<dbReference type="GO" id="GO:1990107">
    <property type="term" value="F:thiazole synthase activity"/>
    <property type="evidence" value="ECO:0007669"/>
    <property type="project" value="UniProtKB-EC"/>
</dbReference>
<dbReference type="GO" id="GO:0009229">
    <property type="term" value="P:thiamine diphosphate biosynthetic process"/>
    <property type="evidence" value="ECO:0007669"/>
    <property type="project" value="UniProtKB-UniRule"/>
</dbReference>
<dbReference type="CDD" id="cd04728">
    <property type="entry name" value="ThiG"/>
    <property type="match status" value="1"/>
</dbReference>
<dbReference type="Gene3D" id="3.20.20.70">
    <property type="entry name" value="Aldolase class I"/>
    <property type="match status" value="1"/>
</dbReference>
<dbReference type="HAMAP" id="MF_00443">
    <property type="entry name" value="ThiG"/>
    <property type="match status" value="1"/>
</dbReference>
<dbReference type="InterPro" id="IPR013785">
    <property type="entry name" value="Aldolase_TIM"/>
</dbReference>
<dbReference type="InterPro" id="IPR033983">
    <property type="entry name" value="Thiazole_synthase_ThiG"/>
</dbReference>
<dbReference type="InterPro" id="IPR008867">
    <property type="entry name" value="ThiG"/>
</dbReference>
<dbReference type="PANTHER" id="PTHR34266">
    <property type="entry name" value="THIAZOLE SYNTHASE"/>
    <property type="match status" value="1"/>
</dbReference>
<dbReference type="PANTHER" id="PTHR34266:SF2">
    <property type="entry name" value="THIAZOLE SYNTHASE"/>
    <property type="match status" value="1"/>
</dbReference>
<dbReference type="Pfam" id="PF05690">
    <property type="entry name" value="ThiG"/>
    <property type="match status" value="1"/>
</dbReference>
<dbReference type="SUPFAM" id="SSF110399">
    <property type="entry name" value="ThiG-like"/>
    <property type="match status" value="1"/>
</dbReference>
<proteinExistence type="inferred from homology"/>
<sequence length="259" mass="27541">MSDKLTIAGREFASRLIVGTGKYRSFQEMQRCHEASGADMVTVAVRRVNLTDRTKESLIDYIDRSKIFILPNTAGCYTADDAVRTAMLGREVGLSNWVKLEVIGDEKTLFPDNAGLLEATRILVKEGFAVLPYTNDDIVNARRLIEAGAAAVMPLAAPIGSGLGIQNPTNLRIFREMITEVPVIVDAGVGTASDAAIAMELGADGVLMNTAIAAAEDAVKMARAMKLGVECGRLAFESGRMAKKLYASASSPLTGVVGA</sequence>
<gene>
    <name evidence="1" type="primary">thiG</name>
    <name type="ordered locus">Acid_7731</name>
</gene>
<protein>
    <recommendedName>
        <fullName evidence="1">Thiazole synthase</fullName>
        <ecNumber evidence="1">2.8.1.10</ecNumber>
    </recommendedName>
</protein>
<feature type="chain" id="PRO_1000026050" description="Thiazole synthase">
    <location>
        <begin position="1"/>
        <end position="259"/>
    </location>
</feature>
<feature type="active site" description="Schiff-base intermediate with DXP" evidence="1">
    <location>
        <position position="99"/>
    </location>
</feature>
<feature type="binding site" evidence="1">
    <location>
        <position position="160"/>
    </location>
    <ligand>
        <name>1-deoxy-D-xylulose 5-phosphate</name>
        <dbReference type="ChEBI" id="CHEBI:57792"/>
    </ligand>
</feature>
<feature type="binding site" evidence="1">
    <location>
        <begin position="187"/>
        <end position="188"/>
    </location>
    <ligand>
        <name>1-deoxy-D-xylulose 5-phosphate</name>
        <dbReference type="ChEBI" id="CHEBI:57792"/>
    </ligand>
</feature>
<feature type="binding site" evidence="1">
    <location>
        <begin position="209"/>
        <end position="210"/>
    </location>
    <ligand>
        <name>1-deoxy-D-xylulose 5-phosphate</name>
        <dbReference type="ChEBI" id="CHEBI:57792"/>
    </ligand>
</feature>
<accession>Q01NZ1</accession>
<keyword id="KW-0963">Cytoplasm</keyword>
<keyword id="KW-0704">Schiff base</keyword>
<keyword id="KW-0784">Thiamine biosynthesis</keyword>
<keyword id="KW-0808">Transferase</keyword>
<evidence type="ECO:0000255" key="1">
    <source>
        <dbReference type="HAMAP-Rule" id="MF_00443"/>
    </source>
</evidence>
<organism>
    <name type="scientific">Solibacter usitatus (strain Ellin6076)</name>
    <dbReference type="NCBI Taxonomy" id="234267"/>
    <lineage>
        <taxon>Bacteria</taxon>
        <taxon>Pseudomonadati</taxon>
        <taxon>Acidobacteriota</taxon>
        <taxon>Terriglobia</taxon>
        <taxon>Bryobacterales</taxon>
        <taxon>Solibacteraceae</taxon>
        <taxon>Candidatus Solibacter</taxon>
    </lineage>
</organism>
<reference key="1">
    <citation type="journal article" date="2009" name="Appl. Environ. Microbiol.">
        <title>Three genomes from the phylum Acidobacteria provide insight into the lifestyles of these microorganisms in soils.</title>
        <authorList>
            <person name="Ward N.L."/>
            <person name="Challacombe J.F."/>
            <person name="Janssen P.H."/>
            <person name="Henrissat B."/>
            <person name="Coutinho P.M."/>
            <person name="Wu M."/>
            <person name="Xie G."/>
            <person name="Haft D.H."/>
            <person name="Sait M."/>
            <person name="Badger J."/>
            <person name="Barabote R.D."/>
            <person name="Bradley B."/>
            <person name="Brettin T.S."/>
            <person name="Brinkac L.M."/>
            <person name="Bruce D."/>
            <person name="Creasy T."/>
            <person name="Daugherty S.C."/>
            <person name="Davidsen T.M."/>
            <person name="DeBoy R.T."/>
            <person name="Detter J.C."/>
            <person name="Dodson R.J."/>
            <person name="Durkin A.S."/>
            <person name="Ganapathy A."/>
            <person name="Gwinn-Giglio M."/>
            <person name="Han C.S."/>
            <person name="Khouri H."/>
            <person name="Kiss H."/>
            <person name="Kothari S.P."/>
            <person name="Madupu R."/>
            <person name="Nelson K.E."/>
            <person name="Nelson W.C."/>
            <person name="Paulsen I."/>
            <person name="Penn K."/>
            <person name="Ren Q."/>
            <person name="Rosovitz M.J."/>
            <person name="Selengut J.D."/>
            <person name="Shrivastava S."/>
            <person name="Sullivan S.A."/>
            <person name="Tapia R."/>
            <person name="Thompson L.S."/>
            <person name="Watkins K.L."/>
            <person name="Yang Q."/>
            <person name="Yu C."/>
            <person name="Zafar N."/>
            <person name="Zhou L."/>
            <person name="Kuske C.R."/>
        </authorList>
    </citation>
    <scope>NUCLEOTIDE SEQUENCE [LARGE SCALE GENOMIC DNA]</scope>
    <source>
        <strain>Ellin6076</strain>
    </source>
</reference>
<name>THIG_SOLUE</name>
<comment type="function">
    <text evidence="1">Catalyzes the rearrangement of 1-deoxy-D-xylulose 5-phosphate (DXP) to produce the thiazole phosphate moiety of thiamine. Sulfur is provided by the thiocarboxylate moiety of the carrier protein ThiS. In vitro, sulfur can be provided by H(2)S.</text>
</comment>
<comment type="catalytic activity">
    <reaction evidence="1">
        <text>[ThiS sulfur-carrier protein]-C-terminal-Gly-aminoethanethioate + 2-iminoacetate + 1-deoxy-D-xylulose 5-phosphate = [ThiS sulfur-carrier protein]-C-terminal Gly-Gly + 2-[(2R,5Z)-2-carboxy-4-methylthiazol-5(2H)-ylidene]ethyl phosphate + 2 H2O + H(+)</text>
        <dbReference type="Rhea" id="RHEA:26297"/>
        <dbReference type="Rhea" id="RHEA-COMP:12909"/>
        <dbReference type="Rhea" id="RHEA-COMP:19908"/>
        <dbReference type="ChEBI" id="CHEBI:15377"/>
        <dbReference type="ChEBI" id="CHEBI:15378"/>
        <dbReference type="ChEBI" id="CHEBI:57792"/>
        <dbReference type="ChEBI" id="CHEBI:62899"/>
        <dbReference type="ChEBI" id="CHEBI:77846"/>
        <dbReference type="ChEBI" id="CHEBI:90778"/>
        <dbReference type="ChEBI" id="CHEBI:232372"/>
        <dbReference type="EC" id="2.8.1.10"/>
    </reaction>
</comment>
<comment type="pathway">
    <text evidence="1">Cofactor biosynthesis; thiamine diphosphate biosynthesis.</text>
</comment>
<comment type="subunit">
    <text evidence="1">Homotetramer. Forms heterodimers with either ThiH or ThiS.</text>
</comment>
<comment type="subcellular location">
    <subcellularLocation>
        <location evidence="1">Cytoplasm</location>
    </subcellularLocation>
</comment>
<comment type="similarity">
    <text evidence="1">Belongs to the ThiG family.</text>
</comment>